<reference key="1">
    <citation type="journal article" date="2004" name="BMC Evol. Biol.">
        <title>Structure-function evolution of the transforming acidic coiled coil genes revealed by analysis of phylogenetically diverse organisms.</title>
        <authorList>
            <person name="Still I.H."/>
            <person name="Vettaikkorumakankauv A.K."/>
            <person name="DiMatteo A."/>
            <person name="Liang P."/>
        </authorList>
    </citation>
    <scope>NUCLEOTIDE SEQUENCE [MRNA] (ISOFORMS 1 AND 2)</scope>
    <source>
        <strain>C57BL/6J</strain>
        <tissue>Spinal cord</tissue>
    </source>
</reference>
<reference key="2">
    <citation type="journal article" date="2004" name="Genome Res.">
        <title>The status, quality, and expansion of the NIH full-length cDNA project: the Mammalian Gene Collection (MGC).</title>
        <authorList>
            <consortium name="The MGC Project Team"/>
        </authorList>
    </citation>
    <scope>NUCLEOTIDE SEQUENCE [LARGE SCALE MRNA] (ISOFORM 2)</scope>
    <source>
        <tissue>Brain</tissue>
    </source>
</reference>
<reference key="3">
    <citation type="journal article" date="2009" name="Immunity">
        <title>The phagosomal proteome in interferon-gamma-activated macrophages.</title>
        <authorList>
            <person name="Trost M."/>
            <person name="English L."/>
            <person name="Lemieux S."/>
            <person name="Courcelles M."/>
            <person name="Desjardins M."/>
            <person name="Thibault P."/>
        </authorList>
    </citation>
    <scope>PHOSPHORYLATION [LARGE SCALE ANALYSIS] AT SER-376</scope>
    <scope>IDENTIFICATION BY MASS SPECTROMETRY [LARGE SCALE ANALYSIS]</scope>
</reference>
<reference key="4">
    <citation type="journal article" date="2010" name="BMC Mol. Biol.">
        <title>The transforming acidic coiled coil (TACC1) protein modulates the transcriptional activity of the nuclear receptors TR and RAR.</title>
        <authorList>
            <person name="Guyot R."/>
            <person name="Vincent S."/>
            <person name="Bertin J."/>
            <person name="Samarut J."/>
            <person name="Ravel-Chapuis P."/>
        </authorList>
    </citation>
    <scope>INTERACTION WITH RARA AND THRA</scope>
    <scope>SUBCELLULAR LOCATION</scope>
</reference>
<reference key="5">
    <citation type="journal article" date="2010" name="Cell">
        <title>A tissue-specific atlas of mouse protein phosphorylation and expression.</title>
        <authorList>
            <person name="Huttlin E.L."/>
            <person name="Jedrychowski M.P."/>
            <person name="Elias J.E."/>
            <person name="Goswami T."/>
            <person name="Rad R."/>
            <person name="Beausoleil S.A."/>
            <person name="Villen J."/>
            <person name="Haas W."/>
            <person name="Sowa M.E."/>
            <person name="Gygi S.P."/>
        </authorList>
    </citation>
    <scope>PHOSPHORYLATION [LARGE SCALE ANALYSIS] AT SER-401; SER-480 AND SER-560</scope>
    <scope>IDENTIFICATION BY MASS SPECTROMETRY [LARGE SCALE ANALYSIS]</scope>
    <source>
        <tissue>Brain</tissue>
        <tissue>Kidney</tissue>
        <tissue>Lung</tissue>
        <tissue>Pancreas</tissue>
        <tissue>Spleen</tissue>
        <tissue>Testis</tissue>
    </source>
</reference>
<dbReference type="EMBL" id="AY177412">
    <property type="protein sequence ID" value="AAO53447.1"/>
    <property type="molecule type" value="mRNA"/>
</dbReference>
<dbReference type="EMBL" id="AY177413">
    <property type="protein sequence ID" value="AAO53448.1"/>
    <property type="molecule type" value="mRNA"/>
</dbReference>
<dbReference type="EMBL" id="BC125389">
    <property type="protein sequence ID" value="AAI25390.1"/>
    <property type="molecule type" value="mRNA"/>
</dbReference>
<dbReference type="EMBL" id="BC145709">
    <property type="protein sequence ID" value="AAI45710.1"/>
    <property type="molecule type" value="mRNA"/>
</dbReference>
<dbReference type="CCDS" id="CCDS40302.1">
    <molecule id="Q6Y685-2"/>
</dbReference>
<dbReference type="RefSeq" id="NP_796063.3">
    <property type="nucleotide sequence ID" value="NM_177089.5"/>
</dbReference>
<dbReference type="RefSeq" id="NP_955355.1">
    <molecule id="Q6Y685-2"/>
    <property type="nucleotide sequence ID" value="NM_199323.4"/>
</dbReference>
<dbReference type="SMR" id="Q6Y685"/>
<dbReference type="BioGRID" id="235809">
    <property type="interactions" value="4"/>
</dbReference>
<dbReference type="CORUM" id="Q6Y685"/>
<dbReference type="FunCoup" id="Q6Y685">
    <property type="interactions" value="1359"/>
</dbReference>
<dbReference type="IntAct" id="Q6Y685">
    <property type="interactions" value="2"/>
</dbReference>
<dbReference type="STRING" id="10090.ENSMUSP00000081043"/>
<dbReference type="GlyGen" id="Q6Y685">
    <property type="glycosylation" value="2 sites, 1 O-linked glycan (1 site)"/>
</dbReference>
<dbReference type="iPTMnet" id="Q6Y685"/>
<dbReference type="PhosphoSitePlus" id="Q6Y685"/>
<dbReference type="SwissPalm" id="Q6Y685"/>
<dbReference type="jPOST" id="Q6Y685"/>
<dbReference type="PaxDb" id="10090-ENSMUSP00000081043"/>
<dbReference type="PeptideAtlas" id="Q6Y685"/>
<dbReference type="ProteomicsDB" id="254489">
    <molecule id="Q6Y685-1"/>
</dbReference>
<dbReference type="ProteomicsDB" id="254490">
    <molecule id="Q6Y685-2"/>
</dbReference>
<dbReference type="Pumba" id="Q6Y685"/>
<dbReference type="Antibodypedia" id="4470">
    <property type="antibodies" value="240 antibodies from 32 providers"/>
</dbReference>
<dbReference type="DNASU" id="320165"/>
<dbReference type="Ensembl" id="ENSMUST00000084512.11">
    <molecule id="Q6Y685-2"/>
    <property type="protein sequence ID" value="ENSMUSP00000081560.5"/>
    <property type="gene ID" value="ENSMUSG00000065954.12"/>
</dbReference>
<dbReference type="GeneID" id="320165"/>
<dbReference type="KEGG" id="mmu:320165"/>
<dbReference type="UCSC" id="uc009lft.2">
    <molecule id="Q6Y685-2"/>
    <property type="organism name" value="mouse"/>
</dbReference>
<dbReference type="AGR" id="MGI:2443510"/>
<dbReference type="CTD" id="6867"/>
<dbReference type="MGI" id="MGI:2443510">
    <property type="gene designation" value="Tacc1"/>
</dbReference>
<dbReference type="VEuPathDB" id="HostDB:ENSMUSG00000065954"/>
<dbReference type="eggNOG" id="ENOG502QUCC">
    <property type="taxonomic scope" value="Eukaryota"/>
</dbReference>
<dbReference type="GeneTree" id="ENSGT00940000156991"/>
<dbReference type="HOGENOM" id="CLU_005375_2_1_1"/>
<dbReference type="InParanoid" id="Q6Y685"/>
<dbReference type="OrthoDB" id="10255048at2759"/>
<dbReference type="PhylomeDB" id="Q6Y685"/>
<dbReference type="BioGRID-ORCS" id="320165">
    <property type="hits" value="3 hits in 77 CRISPR screens"/>
</dbReference>
<dbReference type="ChiTaRS" id="Tacc1">
    <property type="organism name" value="mouse"/>
</dbReference>
<dbReference type="PRO" id="PR:Q6Y685"/>
<dbReference type="Proteomes" id="UP000000589">
    <property type="component" value="Chromosome 8"/>
</dbReference>
<dbReference type="RNAct" id="Q6Y685">
    <property type="molecule type" value="protein"/>
</dbReference>
<dbReference type="Bgee" id="ENSMUSG00000065954">
    <property type="expression patterns" value="Expressed in gastrula and 221 other cell types or tissues"/>
</dbReference>
<dbReference type="ExpressionAtlas" id="Q6Y685">
    <property type="expression patterns" value="baseline and differential"/>
</dbReference>
<dbReference type="GO" id="GO:0005813">
    <property type="term" value="C:centrosome"/>
    <property type="evidence" value="ECO:0007669"/>
    <property type="project" value="UniProtKB-SubCell"/>
</dbReference>
<dbReference type="GO" id="GO:0005737">
    <property type="term" value="C:cytoplasm"/>
    <property type="evidence" value="ECO:0007669"/>
    <property type="project" value="UniProtKB-SubCell"/>
</dbReference>
<dbReference type="GO" id="GO:0030496">
    <property type="term" value="C:midbody"/>
    <property type="evidence" value="ECO:0007669"/>
    <property type="project" value="UniProtKB-SubCell"/>
</dbReference>
<dbReference type="GO" id="GO:0005634">
    <property type="term" value="C:nucleus"/>
    <property type="evidence" value="ECO:0007669"/>
    <property type="project" value="UniProtKB-SubCell"/>
</dbReference>
<dbReference type="GO" id="GO:0030331">
    <property type="term" value="F:nuclear estrogen receptor binding"/>
    <property type="evidence" value="ECO:0000250"/>
    <property type="project" value="UniProtKB"/>
</dbReference>
<dbReference type="GO" id="GO:0035259">
    <property type="term" value="F:nuclear glucocorticoid receptor binding"/>
    <property type="evidence" value="ECO:0000250"/>
    <property type="project" value="UniProtKB"/>
</dbReference>
<dbReference type="GO" id="GO:0042974">
    <property type="term" value="F:nuclear retinoic acid receptor binding"/>
    <property type="evidence" value="ECO:0000314"/>
    <property type="project" value="UniProtKB"/>
</dbReference>
<dbReference type="GO" id="GO:0046965">
    <property type="term" value="F:nuclear retinoid X receptor binding"/>
    <property type="evidence" value="ECO:0000314"/>
    <property type="project" value="UniProtKB"/>
</dbReference>
<dbReference type="GO" id="GO:0046966">
    <property type="term" value="F:nuclear thyroid hormone receptor binding"/>
    <property type="evidence" value="ECO:0000314"/>
    <property type="project" value="UniProtKB"/>
</dbReference>
<dbReference type="GO" id="GO:0042975">
    <property type="term" value="F:peroxisome proliferator activated receptor binding"/>
    <property type="evidence" value="ECO:0000314"/>
    <property type="project" value="UniProtKB"/>
</dbReference>
<dbReference type="GO" id="GO:0019904">
    <property type="term" value="F:protein domain specific binding"/>
    <property type="evidence" value="ECO:0000353"/>
    <property type="project" value="MGI"/>
</dbReference>
<dbReference type="GO" id="GO:0003713">
    <property type="term" value="F:transcription coactivator activity"/>
    <property type="evidence" value="ECO:0000250"/>
    <property type="project" value="UniProtKB"/>
</dbReference>
<dbReference type="GO" id="GO:0051301">
    <property type="term" value="P:cell division"/>
    <property type="evidence" value="ECO:0007669"/>
    <property type="project" value="UniProtKB-KW"/>
</dbReference>
<dbReference type="GO" id="GO:0008283">
    <property type="term" value="P:cell population proliferation"/>
    <property type="evidence" value="ECO:0000315"/>
    <property type="project" value="MGI"/>
</dbReference>
<dbReference type="GO" id="GO:0021987">
    <property type="term" value="P:cerebral cortex development"/>
    <property type="evidence" value="ECO:0000315"/>
    <property type="project" value="MGI"/>
</dbReference>
<dbReference type="GO" id="GO:0022027">
    <property type="term" value="P:interkinetic nuclear migration"/>
    <property type="evidence" value="ECO:0000315"/>
    <property type="project" value="MGI"/>
</dbReference>
<dbReference type="GO" id="GO:0000226">
    <property type="term" value="P:microtubule cytoskeleton organization"/>
    <property type="evidence" value="ECO:0000315"/>
    <property type="project" value="MGI"/>
</dbReference>
<dbReference type="GO" id="GO:0007052">
    <property type="term" value="P:mitotic spindle organization"/>
    <property type="evidence" value="ECO:0007669"/>
    <property type="project" value="InterPro"/>
</dbReference>
<dbReference type="GO" id="GO:0022008">
    <property type="term" value="P:neurogenesis"/>
    <property type="evidence" value="ECO:0000315"/>
    <property type="project" value="MGI"/>
</dbReference>
<dbReference type="GO" id="GO:0032886">
    <property type="term" value="P:regulation of microtubule-based process"/>
    <property type="evidence" value="ECO:0000315"/>
    <property type="project" value="MGI"/>
</dbReference>
<dbReference type="FunFam" id="1.20.5.1700:FF:000001">
    <property type="entry name" value="Transforming acidic coiled-coil-containing protein 1 isoform 2"/>
    <property type="match status" value="1"/>
</dbReference>
<dbReference type="Gene3D" id="1.20.5.1700">
    <property type="match status" value="1"/>
</dbReference>
<dbReference type="InterPro" id="IPR039915">
    <property type="entry name" value="TACC"/>
</dbReference>
<dbReference type="InterPro" id="IPR007707">
    <property type="entry name" value="TACC_C"/>
</dbReference>
<dbReference type="PANTHER" id="PTHR13924">
    <property type="entry name" value="TRANSFORMING ACIDIC COILED-COIL CONTAINING PROTEIN 1/2"/>
    <property type="match status" value="1"/>
</dbReference>
<dbReference type="PANTHER" id="PTHR13924:SF12">
    <property type="entry name" value="TRANSFORMING ACIDIC COILED-COIL-CONTAINING PROTEIN 1"/>
    <property type="match status" value="1"/>
</dbReference>
<dbReference type="Pfam" id="PF05010">
    <property type="entry name" value="TACC_C"/>
    <property type="match status" value="1"/>
</dbReference>
<comment type="function">
    <text evidence="2">Involved in transcription regulation induced by nuclear receptors, including in T3 thyroid hormone and all-trans retinoic acid pathways. Might promote the nuclear localization of the receptors (By similarity). Likely involved in the processes that promote cell division prior to the formation of differentiated tissues.</text>
</comment>
<comment type="subunit">
    <text evidence="1 2 5">Interacts with CH-TOG and YEATS4. Interacts with the AURKA and AURKB and AURKC. Interacts with LSM7, TDRD7 and SNRPG. Interacts with GCN5L2 and PCAF (By similarity). Interacts with the thyroid hormone receptors THRB and THRA, predominantly with isoform alpha-2. The interaction with THRA isoform alpha-1 and THRB is decreased in the presence of thyroid hormone T3 (PubMed:20078863). Interacts with RARA in the nucleus (PubMed:20078863). Also interacts with other nuclear receptors, including ESR1, NR3C1, PPARG and RXRA, preferentially in the absence of their hormonal ligands (By similarity).</text>
</comment>
<comment type="subcellular location">
    <subcellularLocation>
        <location evidence="2">Cytoplasm</location>
    </subcellularLocation>
    <subcellularLocation>
        <location evidence="5">Nucleus</location>
    </subcellularLocation>
    <subcellularLocation>
        <location evidence="2">Cytoplasm</location>
        <location evidence="2">Cytoskeleton</location>
        <location evidence="2">Microtubule organizing center</location>
        <location evidence="2">Centrosome</location>
    </subcellularLocation>
    <subcellularLocation>
        <location evidence="2">Midbody</location>
    </subcellularLocation>
    <text evidence="2">Nucleus during interphase. Weakly concentrated at centrosomes during mitosis and colocalizes with AURKC at the midbody during cytokinesis.</text>
</comment>
<comment type="alternative products">
    <event type="alternative splicing"/>
    <isoform>
        <id>Q6Y685-1</id>
        <name>1</name>
        <name>Long</name>
        <sequence type="displayed"/>
    </isoform>
    <isoform>
        <id>Q6Y685-2</id>
        <name>2</name>
        <name>Short</name>
        <sequence type="described" ref="VSP_012650 VSP_012651"/>
    </isoform>
</comment>
<comment type="similarity">
    <text evidence="8">Belongs to the TACC family.</text>
</comment>
<name>TACC1_MOUSE</name>
<accession>Q6Y685</accession>
<accession>Q05A66</accession>
<accession>Q6Y686</accession>
<feature type="initiator methionine" description="Removed" evidence="2">
    <location>
        <position position="1"/>
    </location>
</feature>
<feature type="chain" id="PRO_0000179987" description="Transforming acidic coiled-coil-containing protein 1">
    <location>
        <begin position="2"/>
        <end position="774"/>
    </location>
</feature>
<feature type="domain" description="SPAZ 1">
    <location>
        <begin position="216"/>
        <end position="294"/>
    </location>
</feature>
<feature type="domain" description="SPAZ 2">
    <location>
        <begin position="354"/>
        <end position="504"/>
    </location>
</feature>
<feature type="region of interest" description="Interaction with LSM7 and SNRPG" evidence="1">
    <location>
        <begin position="2"/>
        <end position="56"/>
    </location>
</feature>
<feature type="region of interest" description="Disordered" evidence="4">
    <location>
        <begin position="21"/>
        <end position="142"/>
    </location>
</feature>
<feature type="region of interest" description="Interaction with TDRD7" evidence="1">
    <location>
        <begin position="153"/>
        <end position="255"/>
    </location>
</feature>
<feature type="region of interest" description="Interaction with YEATS4" evidence="1">
    <location>
        <begin position="207"/>
        <end position="424"/>
    </location>
</feature>
<feature type="region of interest" description="Disordered" evidence="4">
    <location>
        <begin position="214"/>
        <end position="428"/>
    </location>
</feature>
<feature type="region of interest" description="Interaction with CH-TOG" evidence="1">
    <location>
        <begin position="670"/>
        <end position="774"/>
    </location>
</feature>
<feature type="coiled-coil region">
    <location>
        <begin position="579"/>
        <end position="774"/>
    </location>
</feature>
<feature type="short sequence motif" description="Bipartite nuclear localization signal" evidence="3">
    <location>
        <begin position="452"/>
        <end position="468"/>
    </location>
</feature>
<feature type="compositionally biased region" description="Acidic residues" evidence="4">
    <location>
        <begin position="28"/>
        <end position="46"/>
    </location>
</feature>
<feature type="compositionally biased region" description="Polar residues" evidence="4">
    <location>
        <begin position="48"/>
        <end position="61"/>
    </location>
</feature>
<feature type="compositionally biased region" description="Basic and acidic residues" evidence="4">
    <location>
        <begin position="88"/>
        <end position="99"/>
    </location>
</feature>
<feature type="compositionally biased region" description="Polar residues" evidence="4">
    <location>
        <begin position="113"/>
        <end position="128"/>
    </location>
</feature>
<feature type="compositionally biased region" description="Basic and acidic residues" evidence="4">
    <location>
        <begin position="131"/>
        <end position="142"/>
    </location>
</feature>
<feature type="compositionally biased region" description="Basic residues" evidence="4">
    <location>
        <begin position="228"/>
        <end position="241"/>
    </location>
</feature>
<feature type="compositionally biased region" description="Polar residues" evidence="4">
    <location>
        <begin position="397"/>
        <end position="407"/>
    </location>
</feature>
<feature type="modified residue" description="N-acetylalanine" evidence="2">
    <location>
        <position position="2"/>
    </location>
</feature>
<feature type="modified residue" description="Phosphoserine" evidence="2">
    <location>
        <position position="4"/>
    </location>
</feature>
<feature type="modified residue" description="Phosphoserine" evidence="2">
    <location>
        <position position="10"/>
    </location>
</feature>
<feature type="modified residue" description="Phosphoserine" evidence="2">
    <location>
        <position position="45"/>
    </location>
</feature>
<feature type="modified residue" description="Phosphoserine" evidence="2">
    <location>
        <position position="148"/>
    </location>
</feature>
<feature type="modified residue" description="Phosphoserine" evidence="2">
    <location>
        <position position="154"/>
    </location>
</feature>
<feature type="modified residue" description="Phosphoserine; by AURKC" evidence="2">
    <location>
        <position position="228"/>
    </location>
</feature>
<feature type="modified residue" description="Phosphoserine" evidence="9">
    <location>
        <position position="376"/>
    </location>
</feature>
<feature type="modified residue" description="Phosphoserine" evidence="10">
    <location>
        <position position="401"/>
    </location>
</feature>
<feature type="modified residue" description="Phosphoserine" evidence="10">
    <location>
        <position position="480"/>
    </location>
</feature>
<feature type="modified residue" description="Phosphoserine" evidence="10">
    <location>
        <position position="560"/>
    </location>
</feature>
<feature type="splice variant" id="VSP_012650" description="In isoform 2." evidence="6 7">
    <original>S</original>
    <variation>R</variation>
    <location>
        <position position="55"/>
    </location>
</feature>
<feature type="splice variant" id="VSP_012651" description="In isoform 2." evidence="6 7">
    <location>
        <begin position="56"/>
        <end position="461"/>
    </location>
</feature>
<organism>
    <name type="scientific">Mus musculus</name>
    <name type="common">Mouse</name>
    <dbReference type="NCBI Taxonomy" id="10090"/>
    <lineage>
        <taxon>Eukaryota</taxon>
        <taxon>Metazoa</taxon>
        <taxon>Chordata</taxon>
        <taxon>Craniata</taxon>
        <taxon>Vertebrata</taxon>
        <taxon>Euteleostomi</taxon>
        <taxon>Mammalia</taxon>
        <taxon>Eutheria</taxon>
        <taxon>Euarchontoglires</taxon>
        <taxon>Glires</taxon>
        <taxon>Rodentia</taxon>
        <taxon>Myomorpha</taxon>
        <taxon>Muroidea</taxon>
        <taxon>Muridae</taxon>
        <taxon>Murinae</taxon>
        <taxon>Mus</taxon>
        <taxon>Mus</taxon>
    </lineage>
</organism>
<protein>
    <recommendedName>
        <fullName>Transforming acidic coiled-coil-containing protein 1</fullName>
    </recommendedName>
</protein>
<keyword id="KW-0007">Acetylation</keyword>
<keyword id="KW-0010">Activator</keyword>
<keyword id="KW-0025">Alternative splicing</keyword>
<keyword id="KW-0131">Cell cycle</keyword>
<keyword id="KW-0132">Cell division</keyword>
<keyword id="KW-0175">Coiled coil</keyword>
<keyword id="KW-0963">Cytoplasm</keyword>
<keyword id="KW-0206">Cytoskeleton</keyword>
<keyword id="KW-0539">Nucleus</keyword>
<keyword id="KW-0597">Phosphoprotein</keyword>
<keyword id="KW-1185">Reference proteome</keyword>
<keyword id="KW-0677">Repeat</keyword>
<gene>
    <name type="primary">Tacc1</name>
</gene>
<proteinExistence type="evidence at protein level"/>
<evidence type="ECO:0000250" key="1"/>
<evidence type="ECO:0000250" key="2">
    <source>
        <dbReference type="UniProtKB" id="O75410"/>
    </source>
</evidence>
<evidence type="ECO:0000255" key="3"/>
<evidence type="ECO:0000256" key="4">
    <source>
        <dbReference type="SAM" id="MobiDB-lite"/>
    </source>
</evidence>
<evidence type="ECO:0000269" key="5">
    <source>
    </source>
</evidence>
<evidence type="ECO:0000303" key="6">
    <source>
    </source>
</evidence>
<evidence type="ECO:0000303" key="7">
    <source>
    </source>
</evidence>
<evidence type="ECO:0000305" key="8"/>
<evidence type="ECO:0007744" key="9">
    <source>
    </source>
</evidence>
<evidence type="ECO:0007744" key="10">
    <source>
    </source>
</evidence>
<sequence>MAFSPWQILSPVQWAKWTWSAVRGSGAGEDEAGGPEGDPEEEEDSQAETKSLSFSSDSEGNFETPEAETPIRSPLKESCDSSPGLAEPEAKPQESREADEQLVAEVIEKCSPDTCSRSSENEAPQATVDSHPVKDVRGKAEHDVSKISVVRPFSIETRNCTDDPAALGTAAAHGCVPVLPGMALPSTTPEATQDEPVMDRGMGVTLEAFTEASLKTGGPCPEPVASRSKLRKPKPVSLRKKMAPEPEMLMEGSPLPKASSPWLPDGLDQNANPSVLRGSGAQRSPLNLKETAGVLSNDTSDSGVEVAPGSPPLQLEDDFTEDGENVKIRSALPKQSGRKPSNKLAPSIRKDGVSKPVGVEQPSDPTVQDALLDQMSPKLDPSKRSHPPANFFGSGPILQNSPPLSSKCSHHFDPNNINTDDSGDPCKPTPALTSSGFCPATGNHVNEILDSPKKAKSRLITSGCKVKKYEAQPLDLDACSQDEGAVISKISEIPNRDGHATDEEKLASTSSCAQKSAGAGVKGIEKETCQKMEKEELAVHGLLESSSEKAPVSVACGGESPLDGICLSEADKTAVLTLIREEIITKEIEANEWKKKYEETREEVLEMRKIVAEYEKTIAQMIEDEQRTSMSSQKSFQQLTMEKEQALADLNSVERSLSDLFRRYENLKGVLEGFKKNEEALKKCAQDYLARVKQEEQRYQALKVHAEEKLDRANEEIAQVRSKAKAESAALHAGLRKEQMKVESLERALQQKNQEIEELTKICDELIAKLGKTD</sequence>